<comment type="function">
    <text evidence="1">One of the primary rRNA binding proteins. Required for association of the 30S and 50S subunits to form the 70S ribosome, for tRNA binding and peptide bond formation. It has been suggested to have peptidyltransferase activity; this is somewhat controversial. Makes several contacts with the 16S rRNA in the 70S ribosome.</text>
</comment>
<comment type="subunit">
    <text evidence="1">Part of the 50S ribosomal subunit. Forms a bridge to the 30S subunit in the 70S ribosome.</text>
</comment>
<comment type="similarity">
    <text evidence="1">Belongs to the universal ribosomal protein uL2 family.</text>
</comment>
<accession>C3NEE6</accession>
<feature type="chain" id="PRO_1000214465" description="Large ribosomal subunit protein uL2">
    <location>
        <begin position="1"/>
        <end position="238"/>
    </location>
</feature>
<feature type="region of interest" description="Disordered" evidence="2">
    <location>
        <begin position="200"/>
        <end position="238"/>
    </location>
</feature>
<feature type="compositionally biased region" description="Polar residues" evidence="2">
    <location>
        <begin position="206"/>
        <end position="216"/>
    </location>
</feature>
<feature type="compositionally biased region" description="Basic residues" evidence="2">
    <location>
        <begin position="223"/>
        <end position="238"/>
    </location>
</feature>
<organism>
    <name type="scientific">Saccharolobus islandicus (strain Y.G.57.14 / Yellowstone #1)</name>
    <name type="common">Sulfolobus islandicus</name>
    <dbReference type="NCBI Taxonomy" id="439386"/>
    <lineage>
        <taxon>Archaea</taxon>
        <taxon>Thermoproteota</taxon>
        <taxon>Thermoprotei</taxon>
        <taxon>Sulfolobales</taxon>
        <taxon>Sulfolobaceae</taxon>
        <taxon>Saccharolobus</taxon>
    </lineage>
</organism>
<protein>
    <recommendedName>
        <fullName evidence="1">Large ribosomal subunit protein uL2</fullName>
    </recommendedName>
    <alternativeName>
        <fullName evidence="3">50S ribosomal protein L2</fullName>
    </alternativeName>
</protein>
<keyword id="KW-0687">Ribonucleoprotein</keyword>
<keyword id="KW-0689">Ribosomal protein</keyword>
<keyword id="KW-0694">RNA-binding</keyword>
<keyword id="KW-0699">rRNA-binding</keyword>
<sequence>MGKNLLQQRAGKGSPTFRSPSWLRIGKVRYPNIFGHLVGKVIDIVHNPGMNAPVAIIKLENGTKFLTQAIQGLVINQKIEFGKGSPIANGNVIEIGDAPEGTIVCNVEENFGDGGKYARSAGSYAVVVGKSGDKVLIKLPSDKIKAVSNKARATVGVVAGGGVVEKPLLKAGANYWKYKVKAKKWPIVRGVAMNVVDHPHGGGLHQSVSRPSTVSRNAPPGRKVGHIAARRTGRKEGK</sequence>
<reference key="1">
    <citation type="journal article" date="2009" name="Proc. Natl. Acad. Sci. U.S.A.">
        <title>Biogeography of the Sulfolobus islandicus pan-genome.</title>
        <authorList>
            <person name="Reno M.L."/>
            <person name="Held N.L."/>
            <person name="Fields C.J."/>
            <person name="Burke P.V."/>
            <person name="Whitaker R.J."/>
        </authorList>
    </citation>
    <scope>NUCLEOTIDE SEQUENCE [LARGE SCALE GENOMIC DNA]</scope>
    <source>
        <strain>Y.G.57.14 / Yellowstone #1</strain>
    </source>
</reference>
<evidence type="ECO:0000255" key="1">
    <source>
        <dbReference type="HAMAP-Rule" id="MF_01320"/>
    </source>
</evidence>
<evidence type="ECO:0000256" key="2">
    <source>
        <dbReference type="SAM" id="MobiDB-lite"/>
    </source>
</evidence>
<evidence type="ECO:0000305" key="3"/>
<name>RL2_SACI7</name>
<gene>
    <name evidence="1" type="primary">rpl2</name>
    <name type="ordered locus">YG5714_1418</name>
</gene>
<proteinExistence type="inferred from homology"/>
<dbReference type="EMBL" id="CP001403">
    <property type="protein sequence ID" value="ACP45685.1"/>
    <property type="molecule type" value="Genomic_DNA"/>
</dbReference>
<dbReference type="RefSeq" id="WP_012711421.1">
    <property type="nucleotide sequence ID" value="NC_012622.1"/>
</dbReference>
<dbReference type="SMR" id="C3NEE6"/>
<dbReference type="KEGG" id="siy:YG5714_1418"/>
<dbReference type="HOGENOM" id="CLU_036235_0_1_2"/>
<dbReference type="Proteomes" id="UP000002308">
    <property type="component" value="Chromosome"/>
</dbReference>
<dbReference type="GO" id="GO:0022625">
    <property type="term" value="C:cytosolic large ribosomal subunit"/>
    <property type="evidence" value="ECO:0007669"/>
    <property type="project" value="TreeGrafter"/>
</dbReference>
<dbReference type="GO" id="GO:0019843">
    <property type="term" value="F:rRNA binding"/>
    <property type="evidence" value="ECO:0007669"/>
    <property type="project" value="UniProtKB-UniRule"/>
</dbReference>
<dbReference type="GO" id="GO:0003735">
    <property type="term" value="F:structural constituent of ribosome"/>
    <property type="evidence" value="ECO:0007669"/>
    <property type="project" value="InterPro"/>
</dbReference>
<dbReference type="GO" id="GO:0002181">
    <property type="term" value="P:cytoplasmic translation"/>
    <property type="evidence" value="ECO:0007669"/>
    <property type="project" value="TreeGrafter"/>
</dbReference>
<dbReference type="FunFam" id="2.30.30.30:FF:000001">
    <property type="entry name" value="50S ribosomal protein L2"/>
    <property type="match status" value="1"/>
</dbReference>
<dbReference type="FunFam" id="4.10.950.10:FF:000002">
    <property type="entry name" value="60S ribosomal protein L2"/>
    <property type="match status" value="1"/>
</dbReference>
<dbReference type="Gene3D" id="2.30.30.30">
    <property type="match status" value="1"/>
</dbReference>
<dbReference type="Gene3D" id="2.40.50.140">
    <property type="entry name" value="Nucleic acid-binding proteins"/>
    <property type="match status" value="1"/>
</dbReference>
<dbReference type="Gene3D" id="4.10.950.10">
    <property type="entry name" value="Ribosomal protein L2, domain 3"/>
    <property type="match status" value="1"/>
</dbReference>
<dbReference type="HAMAP" id="MF_01320_A">
    <property type="entry name" value="Ribosomal_uL2_A"/>
    <property type="match status" value="1"/>
</dbReference>
<dbReference type="InterPro" id="IPR012340">
    <property type="entry name" value="NA-bd_OB-fold"/>
</dbReference>
<dbReference type="InterPro" id="IPR014722">
    <property type="entry name" value="Rib_uL2_dom2"/>
</dbReference>
<dbReference type="InterPro" id="IPR002171">
    <property type="entry name" value="Ribosomal_uL2"/>
</dbReference>
<dbReference type="InterPro" id="IPR023672">
    <property type="entry name" value="Ribosomal_uL2_arc_euk"/>
</dbReference>
<dbReference type="InterPro" id="IPR022669">
    <property type="entry name" value="Ribosomal_uL2_C"/>
</dbReference>
<dbReference type="InterPro" id="IPR014726">
    <property type="entry name" value="Ribosomal_uL2_dom3"/>
</dbReference>
<dbReference type="InterPro" id="IPR022666">
    <property type="entry name" value="Ribosomal_uL2_RNA-bd_dom"/>
</dbReference>
<dbReference type="InterPro" id="IPR008991">
    <property type="entry name" value="Translation_prot_SH3-like_sf"/>
</dbReference>
<dbReference type="NCBIfam" id="NF007180">
    <property type="entry name" value="PRK09612.1"/>
    <property type="match status" value="1"/>
</dbReference>
<dbReference type="PANTHER" id="PTHR13691:SF16">
    <property type="entry name" value="LARGE RIBOSOMAL SUBUNIT PROTEIN UL2"/>
    <property type="match status" value="1"/>
</dbReference>
<dbReference type="PANTHER" id="PTHR13691">
    <property type="entry name" value="RIBOSOMAL PROTEIN L2"/>
    <property type="match status" value="1"/>
</dbReference>
<dbReference type="Pfam" id="PF00181">
    <property type="entry name" value="Ribosomal_L2"/>
    <property type="match status" value="1"/>
</dbReference>
<dbReference type="Pfam" id="PF03947">
    <property type="entry name" value="Ribosomal_L2_C"/>
    <property type="match status" value="1"/>
</dbReference>
<dbReference type="PIRSF" id="PIRSF002158">
    <property type="entry name" value="Ribosomal_L2"/>
    <property type="match status" value="1"/>
</dbReference>
<dbReference type="SMART" id="SM01383">
    <property type="entry name" value="Ribosomal_L2"/>
    <property type="match status" value="1"/>
</dbReference>
<dbReference type="SMART" id="SM01382">
    <property type="entry name" value="Ribosomal_L2_C"/>
    <property type="match status" value="1"/>
</dbReference>
<dbReference type="SUPFAM" id="SSF50249">
    <property type="entry name" value="Nucleic acid-binding proteins"/>
    <property type="match status" value="1"/>
</dbReference>
<dbReference type="SUPFAM" id="SSF50104">
    <property type="entry name" value="Translation proteins SH3-like domain"/>
    <property type="match status" value="1"/>
</dbReference>